<comment type="function">
    <text evidence="1">NDH-1 shuttles electrons from an unknown electron donor, via FMN and iron-sulfur (Fe-S) centers, to quinones in the respiratory and/or the photosynthetic chain. The immediate electron acceptor for the enzyme in this species is believed to be plastoquinone. Couples the redox reaction to proton translocation, and thus conserves the redox energy in a proton gradient.</text>
</comment>
<comment type="catalytic activity">
    <reaction evidence="1">
        <text>a plastoquinone + NADH + (n+1) H(+)(in) = a plastoquinol + NAD(+) + n H(+)(out)</text>
        <dbReference type="Rhea" id="RHEA:42608"/>
        <dbReference type="Rhea" id="RHEA-COMP:9561"/>
        <dbReference type="Rhea" id="RHEA-COMP:9562"/>
        <dbReference type="ChEBI" id="CHEBI:15378"/>
        <dbReference type="ChEBI" id="CHEBI:17757"/>
        <dbReference type="ChEBI" id="CHEBI:57540"/>
        <dbReference type="ChEBI" id="CHEBI:57945"/>
        <dbReference type="ChEBI" id="CHEBI:62192"/>
    </reaction>
</comment>
<comment type="catalytic activity">
    <reaction evidence="1">
        <text>a plastoquinone + NADPH + (n+1) H(+)(in) = a plastoquinol + NADP(+) + n H(+)(out)</text>
        <dbReference type="Rhea" id="RHEA:42612"/>
        <dbReference type="Rhea" id="RHEA-COMP:9561"/>
        <dbReference type="Rhea" id="RHEA-COMP:9562"/>
        <dbReference type="ChEBI" id="CHEBI:15378"/>
        <dbReference type="ChEBI" id="CHEBI:17757"/>
        <dbReference type="ChEBI" id="CHEBI:57783"/>
        <dbReference type="ChEBI" id="CHEBI:58349"/>
        <dbReference type="ChEBI" id="CHEBI:62192"/>
    </reaction>
</comment>
<comment type="cofactor">
    <cofactor evidence="1">
        <name>[4Fe-4S] cluster</name>
        <dbReference type="ChEBI" id="CHEBI:49883"/>
    </cofactor>
    <text evidence="1">Binds 2 [4Fe-4S] clusters per subunit.</text>
</comment>
<comment type="subunit">
    <text evidence="1">NDH-1 is composed of at least 11 different subunits.</text>
</comment>
<comment type="subcellular location">
    <subcellularLocation>
        <location evidence="1">Cell inner membrane</location>
        <topology evidence="1">Peripheral membrane protein</topology>
    </subcellularLocation>
</comment>
<comment type="similarity">
    <text evidence="1">Belongs to the complex I 23 kDa subunit family.</text>
</comment>
<keyword id="KW-0004">4Fe-4S</keyword>
<keyword id="KW-0997">Cell inner membrane</keyword>
<keyword id="KW-1003">Cell membrane</keyword>
<keyword id="KW-0408">Iron</keyword>
<keyword id="KW-0411">Iron-sulfur</keyword>
<keyword id="KW-0472">Membrane</keyword>
<keyword id="KW-0479">Metal-binding</keyword>
<keyword id="KW-0520">NAD</keyword>
<keyword id="KW-0521">NADP</keyword>
<keyword id="KW-0618">Plastoquinone</keyword>
<keyword id="KW-0874">Quinone</keyword>
<keyword id="KW-1185">Reference proteome</keyword>
<keyword id="KW-0677">Repeat</keyword>
<keyword id="KW-1278">Translocase</keyword>
<sequence>MVKFLEKVGGYARDVLESAKYIGQGMGVVFDHMRRKPVTVQYPYEKLIPSERFRGRIHFERPKCISCEVCVRVCPINLPVVDYEFNKETKKKELNSYSIDFGVCIFCGNCVEYCPTSCLSMTEEYELSVYDRHELNYDDVALGRLPTRVTDDPVVRPIRELAYLPKGVMDGHLEDPGSRRAGELPEEIVARLRPADHSSGTDANKKEGE</sequence>
<proteinExistence type="inferred from homology"/>
<accession>Q7NMW1</accession>
<organism>
    <name type="scientific">Gloeobacter violaceus (strain ATCC 29082 / PCC 7421)</name>
    <dbReference type="NCBI Taxonomy" id="251221"/>
    <lineage>
        <taxon>Bacteria</taxon>
        <taxon>Bacillati</taxon>
        <taxon>Cyanobacteriota</taxon>
        <taxon>Cyanophyceae</taxon>
        <taxon>Gloeobacterales</taxon>
        <taxon>Gloeobacteraceae</taxon>
        <taxon>Gloeobacter</taxon>
    </lineage>
</organism>
<feature type="chain" id="PRO_0000245681" description="NAD(P)H-quinone oxidoreductase subunit I">
    <location>
        <begin position="1"/>
        <end position="209"/>
    </location>
</feature>
<feature type="domain" description="4Fe-4S ferredoxin-type 1" evidence="1">
    <location>
        <begin position="55"/>
        <end position="84"/>
    </location>
</feature>
<feature type="domain" description="4Fe-4S ferredoxin-type 2" evidence="1">
    <location>
        <begin position="95"/>
        <end position="124"/>
    </location>
</feature>
<feature type="binding site" evidence="1">
    <location>
        <position position="64"/>
    </location>
    <ligand>
        <name>[4Fe-4S] cluster</name>
        <dbReference type="ChEBI" id="CHEBI:49883"/>
        <label>1</label>
    </ligand>
</feature>
<feature type="binding site" evidence="1">
    <location>
        <position position="67"/>
    </location>
    <ligand>
        <name>[4Fe-4S] cluster</name>
        <dbReference type="ChEBI" id="CHEBI:49883"/>
        <label>1</label>
    </ligand>
</feature>
<feature type="binding site" evidence="1">
    <location>
        <position position="70"/>
    </location>
    <ligand>
        <name>[4Fe-4S] cluster</name>
        <dbReference type="ChEBI" id="CHEBI:49883"/>
        <label>1</label>
    </ligand>
</feature>
<feature type="binding site" evidence="1">
    <location>
        <position position="74"/>
    </location>
    <ligand>
        <name>[4Fe-4S] cluster</name>
        <dbReference type="ChEBI" id="CHEBI:49883"/>
        <label>2</label>
    </ligand>
</feature>
<feature type="binding site" evidence="1">
    <location>
        <position position="104"/>
    </location>
    <ligand>
        <name>[4Fe-4S] cluster</name>
        <dbReference type="ChEBI" id="CHEBI:49883"/>
        <label>2</label>
    </ligand>
</feature>
<feature type="binding site" evidence="1">
    <location>
        <position position="107"/>
    </location>
    <ligand>
        <name>[4Fe-4S] cluster</name>
        <dbReference type="ChEBI" id="CHEBI:49883"/>
        <label>2</label>
    </ligand>
</feature>
<feature type="binding site" evidence="1">
    <location>
        <position position="110"/>
    </location>
    <ligand>
        <name>[4Fe-4S] cluster</name>
        <dbReference type="ChEBI" id="CHEBI:49883"/>
        <label>2</label>
    </ligand>
</feature>
<feature type="binding site" evidence="1">
    <location>
        <position position="114"/>
    </location>
    <ligand>
        <name>[4Fe-4S] cluster</name>
        <dbReference type="ChEBI" id="CHEBI:49883"/>
        <label>1</label>
    </ligand>
</feature>
<reference key="1">
    <citation type="journal article" date="2003" name="DNA Res.">
        <title>Complete genome structure of Gloeobacter violaceus PCC 7421, a cyanobacterium that lacks thylakoids.</title>
        <authorList>
            <person name="Nakamura Y."/>
            <person name="Kaneko T."/>
            <person name="Sato S."/>
            <person name="Mimuro M."/>
            <person name="Miyashita H."/>
            <person name="Tsuchiya T."/>
            <person name="Sasamoto S."/>
            <person name="Watanabe A."/>
            <person name="Kawashima K."/>
            <person name="Kishida Y."/>
            <person name="Kiyokawa C."/>
            <person name="Kohara M."/>
            <person name="Matsumoto M."/>
            <person name="Matsuno A."/>
            <person name="Nakazaki N."/>
            <person name="Shimpo S."/>
            <person name="Takeuchi C."/>
            <person name="Yamada M."/>
            <person name="Tabata S."/>
        </authorList>
    </citation>
    <scope>NUCLEOTIDE SEQUENCE [LARGE SCALE GENOMIC DNA]</scope>
    <source>
        <strain>ATCC 29082 / PCC 7421</strain>
    </source>
</reference>
<evidence type="ECO:0000255" key="1">
    <source>
        <dbReference type="HAMAP-Rule" id="MF_01351"/>
    </source>
</evidence>
<name>NDHI_GLOVI</name>
<gene>
    <name evidence="1" type="primary">ndhI</name>
    <name type="ordered locus">gll0654</name>
</gene>
<dbReference type="EC" id="7.1.1.-" evidence="1"/>
<dbReference type="EMBL" id="BA000045">
    <property type="protein sequence ID" value="BAC88595.1"/>
    <property type="molecule type" value="Genomic_DNA"/>
</dbReference>
<dbReference type="RefSeq" id="NP_923600.1">
    <property type="nucleotide sequence ID" value="NC_005125.1"/>
</dbReference>
<dbReference type="RefSeq" id="WP_011140656.1">
    <property type="nucleotide sequence ID" value="NC_005125.1"/>
</dbReference>
<dbReference type="SMR" id="Q7NMW1"/>
<dbReference type="FunCoup" id="Q7NMW1">
    <property type="interactions" value="295"/>
</dbReference>
<dbReference type="STRING" id="251221.gene:10758129"/>
<dbReference type="EnsemblBacteria" id="BAC88595">
    <property type="protein sequence ID" value="BAC88595"/>
    <property type="gene ID" value="BAC88595"/>
</dbReference>
<dbReference type="KEGG" id="gvi:gll0654"/>
<dbReference type="PATRIC" id="fig|251221.4.peg.663"/>
<dbReference type="eggNOG" id="COG1143">
    <property type="taxonomic scope" value="Bacteria"/>
</dbReference>
<dbReference type="HOGENOM" id="CLU_122804_0_0_3"/>
<dbReference type="InParanoid" id="Q7NMW1"/>
<dbReference type="OrthoDB" id="9798098at2"/>
<dbReference type="PhylomeDB" id="Q7NMW1"/>
<dbReference type="Proteomes" id="UP000000557">
    <property type="component" value="Chromosome"/>
</dbReference>
<dbReference type="GO" id="GO:0005886">
    <property type="term" value="C:plasma membrane"/>
    <property type="evidence" value="ECO:0007669"/>
    <property type="project" value="UniProtKB-SubCell"/>
</dbReference>
<dbReference type="GO" id="GO:0051539">
    <property type="term" value="F:4 iron, 4 sulfur cluster binding"/>
    <property type="evidence" value="ECO:0007669"/>
    <property type="project" value="UniProtKB-KW"/>
</dbReference>
<dbReference type="GO" id="GO:0005506">
    <property type="term" value="F:iron ion binding"/>
    <property type="evidence" value="ECO:0007669"/>
    <property type="project" value="UniProtKB-UniRule"/>
</dbReference>
<dbReference type="GO" id="GO:0008137">
    <property type="term" value="F:NADH dehydrogenase (ubiquinone) activity"/>
    <property type="evidence" value="ECO:0007669"/>
    <property type="project" value="InterPro"/>
</dbReference>
<dbReference type="GO" id="GO:0048038">
    <property type="term" value="F:quinone binding"/>
    <property type="evidence" value="ECO:0007669"/>
    <property type="project" value="UniProtKB-KW"/>
</dbReference>
<dbReference type="GO" id="GO:0019684">
    <property type="term" value="P:photosynthesis, light reaction"/>
    <property type="evidence" value="ECO:0007669"/>
    <property type="project" value="UniProtKB-UniRule"/>
</dbReference>
<dbReference type="Gene3D" id="3.30.70.3270">
    <property type="match status" value="1"/>
</dbReference>
<dbReference type="HAMAP" id="MF_01351">
    <property type="entry name" value="NDH1_NuoI"/>
    <property type="match status" value="1"/>
</dbReference>
<dbReference type="InterPro" id="IPR017896">
    <property type="entry name" value="4Fe4S_Fe-S-bd"/>
</dbReference>
<dbReference type="InterPro" id="IPR017900">
    <property type="entry name" value="4Fe4S_Fe_S_CS"/>
</dbReference>
<dbReference type="InterPro" id="IPR016024">
    <property type="entry name" value="ARM-type_fold"/>
</dbReference>
<dbReference type="InterPro" id="IPR010226">
    <property type="entry name" value="NADH_quinone_OxRdtase_chainI"/>
</dbReference>
<dbReference type="InterPro" id="IPR004497">
    <property type="entry name" value="NDHI"/>
</dbReference>
<dbReference type="NCBIfam" id="TIGR00403">
    <property type="entry name" value="ndhI"/>
    <property type="match status" value="1"/>
</dbReference>
<dbReference type="NCBIfam" id="TIGR01971">
    <property type="entry name" value="NuoI"/>
    <property type="match status" value="1"/>
</dbReference>
<dbReference type="NCBIfam" id="NF004537">
    <property type="entry name" value="PRK05888.1-3"/>
    <property type="match status" value="1"/>
</dbReference>
<dbReference type="PANTHER" id="PTHR47275">
    <property type="entry name" value="NAD(P)H-QUINONE OXIDOREDUCTASE SUBUNIT I, CHLOROPLASTIC"/>
    <property type="match status" value="1"/>
</dbReference>
<dbReference type="PANTHER" id="PTHR47275:SF1">
    <property type="entry name" value="NAD(P)H-QUINONE OXIDOREDUCTASE SUBUNIT I, CHLOROPLASTIC"/>
    <property type="match status" value="1"/>
</dbReference>
<dbReference type="Pfam" id="PF12838">
    <property type="entry name" value="Fer4_7"/>
    <property type="match status" value="1"/>
</dbReference>
<dbReference type="SUPFAM" id="SSF54862">
    <property type="entry name" value="4Fe-4S ferredoxins"/>
    <property type="match status" value="1"/>
</dbReference>
<dbReference type="SUPFAM" id="SSF48371">
    <property type="entry name" value="ARM repeat"/>
    <property type="match status" value="1"/>
</dbReference>
<dbReference type="PROSITE" id="PS00198">
    <property type="entry name" value="4FE4S_FER_1"/>
    <property type="match status" value="2"/>
</dbReference>
<dbReference type="PROSITE" id="PS51379">
    <property type="entry name" value="4FE4S_FER_2"/>
    <property type="match status" value="2"/>
</dbReference>
<protein>
    <recommendedName>
        <fullName evidence="1">NAD(P)H-quinone oxidoreductase subunit I</fullName>
        <ecNumber evidence="1">7.1.1.-</ecNumber>
    </recommendedName>
    <alternativeName>
        <fullName evidence="1">NAD(P)H dehydrogenase I subunit I</fullName>
    </alternativeName>
    <alternativeName>
        <fullName evidence="1">NDH-1 subunit I</fullName>
        <shortName evidence="1">NDH-I</shortName>
    </alternativeName>
</protein>